<dbReference type="EMBL" id="AF238070">
    <property type="protein sequence ID" value="AAQ14215.1"/>
    <property type="molecule type" value="Genomic_DNA"/>
</dbReference>
<dbReference type="RefSeq" id="YP_009130258.1">
    <property type="nucleotide sequence ID" value="NC_026787.1"/>
</dbReference>
<dbReference type="SMR" id="Q6KGX9"/>
<dbReference type="GeneID" id="24020159"/>
<dbReference type="GO" id="GO:0009507">
    <property type="term" value="C:chloroplast"/>
    <property type="evidence" value="ECO:0007669"/>
    <property type="project" value="UniProtKB-SubCell"/>
</dbReference>
<dbReference type="GO" id="GO:0015935">
    <property type="term" value="C:small ribosomal subunit"/>
    <property type="evidence" value="ECO:0007669"/>
    <property type="project" value="InterPro"/>
</dbReference>
<dbReference type="GO" id="GO:0019843">
    <property type="term" value="F:rRNA binding"/>
    <property type="evidence" value="ECO:0007669"/>
    <property type="project" value="UniProtKB-UniRule"/>
</dbReference>
<dbReference type="GO" id="GO:0003735">
    <property type="term" value="F:structural constituent of ribosome"/>
    <property type="evidence" value="ECO:0007669"/>
    <property type="project" value="InterPro"/>
</dbReference>
<dbReference type="GO" id="GO:0006412">
    <property type="term" value="P:translation"/>
    <property type="evidence" value="ECO:0007669"/>
    <property type="project" value="UniProtKB-UniRule"/>
</dbReference>
<dbReference type="CDD" id="cd14871">
    <property type="entry name" value="uS7_Chloroplast"/>
    <property type="match status" value="1"/>
</dbReference>
<dbReference type="FunFam" id="1.10.455.10:FF:000001">
    <property type="entry name" value="30S ribosomal protein S7"/>
    <property type="match status" value="1"/>
</dbReference>
<dbReference type="Gene3D" id="1.10.455.10">
    <property type="entry name" value="Ribosomal protein S7 domain"/>
    <property type="match status" value="1"/>
</dbReference>
<dbReference type="HAMAP" id="MF_00480_B">
    <property type="entry name" value="Ribosomal_uS7_B"/>
    <property type="match status" value="1"/>
</dbReference>
<dbReference type="InterPro" id="IPR000235">
    <property type="entry name" value="Ribosomal_uS7"/>
</dbReference>
<dbReference type="InterPro" id="IPR005717">
    <property type="entry name" value="Ribosomal_uS7_bac/org-type"/>
</dbReference>
<dbReference type="InterPro" id="IPR020606">
    <property type="entry name" value="Ribosomal_uS7_CS"/>
</dbReference>
<dbReference type="InterPro" id="IPR023798">
    <property type="entry name" value="Ribosomal_uS7_dom"/>
</dbReference>
<dbReference type="InterPro" id="IPR036823">
    <property type="entry name" value="Ribosomal_uS7_dom_sf"/>
</dbReference>
<dbReference type="NCBIfam" id="TIGR01029">
    <property type="entry name" value="rpsG_bact"/>
    <property type="match status" value="1"/>
</dbReference>
<dbReference type="PANTHER" id="PTHR11205">
    <property type="entry name" value="RIBOSOMAL PROTEIN S7"/>
    <property type="match status" value="1"/>
</dbReference>
<dbReference type="Pfam" id="PF00177">
    <property type="entry name" value="Ribosomal_S7"/>
    <property type="match status" value="1"/>
</dbReference>
<dbReference type="PIRSF" id="PIRSF002122">
    <property type="entry name" value="RPS7p_RPS7a_RPS5e_RPS7o"/>
    <property type="match status" value="1"/>
</dbReference>
<dbReference type="SUPFAM" id="SSF47973">
    <property type="entry name" value="Ribosomal protein S7"/>
    <property type="match status" value="1"/>
</dbReference>
<dbReference type="PROSITE" id="PS00052">
    <property type="entry name" value="RIBOSOMAL_S7"/>
    <property type="match status" value="1"/>
</dbReference>
<feature type="chain" id="PRO_0000124467" description="Small ribosomal subunit protein uS7c">
    <location>
        <begin position="1"/>
        <end position="155"/>
    </location>
</feature>
<name>RR7_LILSU</name>
<evidence type="ECO:0000250" key="1"/>
<evidence type="ECO:0000305" key="2"/>
<proteinExistence type="inferred from homology"/>
<protein>
    <recommendedName>
        <fullName evidence="2">Small ribosomal subunit protein uS7c</fullName>
    </recommendedName>
    <alternativeName>
        <fullName>30S ribosomal protein S7, chloroplastic</fullName>
    </alternativeName>
</protein>
<gene>
    <name type="primary">rps7</name>
</gene>
<comment type="function">
    <text evidence="1">One of the primary rRNA binding proteins, it binds directly to 16S rRNA where it nucleates assembly of the head domain of the 30S subunit.</text>
</comment>
<comment type="subunit">
    <text>Part of the 30S ribosomal subunit.</text>
</comment>
<comment type="subcellular location">
    <subcellularLocation>
        <location>Plastid</location>
        <location>Chloroplast</location>
    </subcellularLocation>
</comment>
<comment type="similarity">
    <text evidence="2">Belongs to the universal ribosomal protein uS7 family.</text>
</comment>
<keyword id="KW-0150">Chloroplast</keyword>
<keyword id="KW-0934">Plastid</keyword>
<keyword id="KW-0687">Ribonucleoprotein</keyword>
<keyword id="KW-0689">Ribosomal protein</keyword>
<keyword id="KW-0694">RNA-binding</keyword>
<keyword id="KW-0699">rRNA-binding</keyword>
<accession>Q6KGX9</accession>
<sequence length="155" mass="17326">MSRRGTAEEKTAKSDPIYRNRLVNMLVNRILKHGKKSLAYQIIYRALKKIQQKTETNPLSVLRQAIRGVTPNIAVKARRVGGSTHQVPIEIGSTQGKALAIRWLLGASRKRPGRNMAFKLSSELVDAAKGGGDAIRKKEETHRMAEANRAFAHFR</sequence>
<organism>
    <name type="scientific">Lilium superbum</name>
    <name type="common">Turk's cap lily</name>
    <name type="synonym">Lilium canadense subsp. superbum</name>
    <dbReference type="NCBI Taxonomy" id="4692"/>
    <lineage>
        <taxon>Eukaryota</taxon>
        <taxon>Viridiplantae</taxon>
        <taxon>Streptophyta</taxon>
        <taxon>Embryophyta</taxon>
        <taxon>Tracheophyta</taxon>
        <taxon>Spermatophyta</taxon>
        <taxon>Magnoliopsida</taxon>
        <taxon>Liliopsida</taxon>
        <taxon>Liliales</taxon>
        <taxon>Liliaceae</taxon>
        <taxon>Lilium</taxon>
    </lineage>
</organism>
<geneLocation type="chloroplast"/>
<reference key="1">
    <citation type="submission" date="2000-02" db="EMBL/GenBank/DDBJ databases">
        <title>Long branches in the seed plants and the root of the angiosperms.</title>
        <authorList>
            <person name="Graham S.W."/>
            <person name="Reeves P.A."/>
            <person name="Burns A."/>
            <person name="Olmstead R.G."/>
        </authorList>
    </citation>
    <scope>NUCLEOTIDE SEQUENCE [GENOMIC DNA]</scope>
</reference>